<accession>B7V9D2</accession>
<organism>
    <name type="scientific">Pseudomonas aeruginosa (strain LESB58)</name>
    <dbReference type="NCBI Taxonomy" id="557722"/>
    <lineage>
        <taxon>Bacteria</taxon>
        <taxon>Pseudomonadati</taxon>
        <taxon>Pseudomonadota</taxon>
        <taxon>Gammaproteobacteria</taxon>
        <taxon>Pseudomonadales</taxon>
        <taxon>Pseudomonadaceae</taxon>
        <taxon>Pseudomonas</taxon>
    </lineage>
</organism>
<protein>
    <recommendedName>
        <fullName evidence="1">Apolipoprotein N-acyltransferase</fullName>
        <shortName evidence="1">ALP N-acyltransferase</shortName>
        <ecNumber evidence="1">2.3.1.269</ecNumber>
    </recommendedName>
</protein>
<reference key="1">
    <citation type="journal article" date="2009" name="Genome Res.">
        <title>Newly introduced genomic prophage islands are critical determinants of in vivo competitiveness in the Liverpool epidemic strain of Pseudomonas aeruginosa.</title>
        <authorList>
            <person name="Winstanley C."/>
            <person name="Langille M.G.I."/>
            <person name="Fothergill J.L."/>
            <person name="Kukavica-Ibrulj I."/>
            <person name="Paradis-Bleau C."/>
            <person name="Sanschagrin F."/>
            <person name="Thomson N.R."/>
            <person name="Winsor G.L."/>
            <person name="Quail M.A."/>
            <person name="Lennard N."/>
            <person name="Bignell A."/>
            <person name="Clarke L."/>
            <person name="Seeger K."/>
            <person name="Saunders D."/>
            <person name="Harris D."/>
            <person name="Parkhill J."/>
            <person name="Hancock R.E.W."/>
            <person name="Brinkman F.S.L."/>
            <person name="Levesque R.C."/>
        </authorList>
    </citation>
    <scope>NUCLEOTIDE SEQUENCE [LARGE SCALE GENOMIC DNA]</scope>
    <source>
        <strain>LESB58</strain>
    </source>
</reference>
<gene>
    <name evidence="1" type="primary">lnt</name>
    <name type="ordered locus">PLES_09911</name>
</gene>
<feature type="chain" id="PRO_1000137480" description="Apolipoprotein N-acyltransferase">
    <location>
        <begin position="1"/>
        <end position="511"/>
    </location>
</feature>
<feature type="transmembrane region" description="Helical" evidence="1">
    <location>
        <begin position="7"/>
        <end position="29"/>
    </location>
</feature>
<feature type="transmembrane region" description="Helical" evidence="1">
    <location>
        <begin position="58"/>
        <end position="78"/>
    </location>
</feature>
<feature type="transmembrane region" description="Helical" evidence="1">
    <location>
        <begin position="90"/>
        <end position="110"/>
    </location>
</feature>
<feature type="transmembrane region" description="Helical" evidence="1">
    <location>
        <begin position="125"/>
        <end position="145"/>
    </location>
</feature>
<feature type="transmembrane region" description="Helical" evidence="1">
    <location>
        <begin position="163"/>
        <end position="183"/>
    </location>
</feature>
<feature type="transmembrane region" description="Helical" evidence="1">
    <location>
        <begin position="192"/>
        <end position="212"/>
    </location>
</feature>
<feature type="transmembrane region" description="Helical" evidence="1">
    <location>
        <begin position="482"/>
        <end position="502"/>
    </location>
</feature>
<feature type="domain" description="CN hydrolase" evidence="1">
    <location>
        <begin position="230"/>
        <end position="470"/>
    </location>
</feature>
<feature type="active site" description="Proton acceptor" evidence="1">
    <location>
        <position position="269"/>
    </location>
</feature>
<feature type="active site" evidence="1">
    <location>
        <position position="330"/>
    </location>
</feature>
<feature type="active site" description="Nucleophile" evidence="1">
    <location>
        <position position="382"/>
    </location>
</feature>
<name>LNT_PSEA8</name>
<evidence type="ECO:0000255" key="1">
    <source>
        <dbReference type="HAMAP-Rule" id="MF_01148"/>
    </source>
</evidence>
<comment type="function">
    <text evidence="1">Catalyzes the phospholipid dependent N-acylation of the N-terminal cysteine of apolipoprotein, the last step in lipoprotein maturation.</text>
</comment>
<comment type="catalytic activity">
    <reaction evidence="1">
        <text>N-terminal S-1,2-diacyl-sn-glyceryl-L-cysteinyl-[lipoprotein] + a glycerophospholipid = N-acyl-S-1,2-diacyl-sn-glyceryl-L-cysteinyl-[lipoprotein] + a 2-acyl-sn-glycero-3-phospholipid + H(+)</text>
        <dbReference type="Rhea" id="RHEA:48228"/>
        <dbReference type="Rhea" id="RHEA-COMP:14681"/>
        <dbReference type="Rhea" id="RHEA-COMP:14684"/>
        <dbReference type="ChEBI" id="CHEBI:15378"/>
        <dbReference type="ChEBI" id="CHEBI:136912"/>
        <dbReference type="ChEBI" id="CHEBI:140656"/>
        <dbReference type="ChEBI" id="CHEBI:140657"/>
        <dbReference type="ChEBI" id="CHEBI:140660"/>
        <dbReference type="EC" id="2.3.1.269"/>
    </reaction>
</comment>
<comment type="pathway">
    <text evidence="1">Protein modification; lipoprotein biosynthesis (N-acyl transfer).</text>
</comment>
<comment type="subcellular location">
    <subcellularLocation>
        <location evidence="1">Cell inner membrane</location>
        <topology evidence="1">Multi-pass membrane protein</topology>
    </subcellularLocation>
</comment>
<comment type="similarity">
    <text evidence="1">Belongs to the CN hydrolase family. Apolipoprotein N-acyltransferase subfamily.</text>
</comment>
<keyword id="KW-0012">Acyltransferase</keyword>
<keyword id="KW-0997">Cell inner membrane</keyword>
<keyword id="KW-1003">Cell membrane</keyword>
<keyword id="KW-0472">Membrane</keyword>
<keyword id="KW-0808">Transferase</keyword>
<keyword id="KW-0812">Transmembrane</keyword>
<keyword id="KW-1133">Transmembrane helix</keyword>
<proteinExistence type="inferred from homology"/>
<sequence>MRWISRPGWPGHLLALAAGALTPLALAPFDYWPLAILSIALLYLGLRGLPGKSALWRGWWYGFGAFGAGTSWIYVSIHDYGAASVPLASLLMLGFTAGVAFFFALPAWLWARCLRRDNAPLGDALAFAALWLALELFRSWFLTGFPWLYAGYSQLQGPLAGLVPVGGVWLSSFVIALSAALLVNLPRLFPHGASLLLGLVLLLGPWAAGLYLKGHAWTHSAGEPLRVVAIQGNIAQELKWDPNQVRAQLDLYRDLSLPQQDVDLIVWPETAVPILQDMASGYLGAMGQVADEKNAALITGVPVRERLTDGKSRYFNGITVVGEGAGTYLKQKLVPFGEYVPLQDLLRGLIAFFDLPMSDFARGPADQPLLKAKGYEIAPYICYEVVYPEFAAALAAQSQVLLTVSNDTWFGTSIGPLQHLQMAQMRALESGRWMIRATNNGVTGLIDPYGRIVRQIPQFQQGILRGEVIPMQGLTPYLQYRVWPLAGLAGVLLLWALLGRQLRPQERRLFG</sequence>
<dbReference type="EC" id="2.3.1.269" evidence="1"/>
<dbReference type="EMBL" id="FM209186">
    <property type="protein sequence ID" value="CAW25718.1"/>
    <property type="molecule type" value="Genomic_DNA"/>
</dbReference>
<dbReference type="RefSeq" id="WP_012613616.1">
    <property type="nucleotide sequence ID" value="NC_011770.1"/>
</dbReference>
<dbReference type="SMR" id="B7V9D2"/>
<dbReference type="KEGG" id="pag:PLES_09911"/>
<dbReference type="HOGENOM" id="CLU_019563_3_0_6"/>
<dbReference type="UniPathway" id="UPA00666"/>
<dbReference type="GO" id="GO:0005886">
    <property type="term" value="C:plasma membrane"/>
    <property type="evidence" value="ECO:0007669"/>
    <property type="project" value="UniProtKB-SubCell"/>
</dbReference>
<dbReference type="GO" id="GO:0016410">
    <property type="term" value="F:N-acyltransferase activity"/>
    <property type="evidence" value="ECO:0007669"/>
    <property type="project" value="UniProtKB-UniRule"/>
</dbReference>
<dbReference type="GO" id="GO:0042158">
    <property type="term" value="P:lipoprotein biosynthetic process"/>
    <property type="evidence" value="ECO:0007669"/>
    <property type="project" value="UniProtKB-UniRule"/>
</dbReference>
<dbReference type="CDD" id="cd07571">
    <property type="entry name" value="ALP_N-acyl_transferase"/>
    <property type="match status" value="1"/>
</dbReference>
<dbReference type="Gene3D" id="3.60.110.10">
    <property type="entry name" value="Carbon-nitrogen hydrolase"/>
    <property type="match status" value="1"/>
</dbReference>
<dbReference type="HAMAP" id="MF_01148">
    <property type="entry name" value="Lnt"/>
    <property type="match status" value="1"/>
</dbReference>
<dbReference type="InterPro" id="IPR004563">
    <property type="entry name" value="Apolipo_AcylTrfase"/>
</dbReference>
<dbReference type="InterPro" id="IPR003010">
    <property type="entry name" value="C-N_Hydrolase"/>
</dbReference>
<dbReference type="InterPro" id="IPR036526">
    <property type="entry name" value="C-N_Hydrolase_sf"/>
</dbReference>
<dbReference type="InterPro" id="IPR045378">
    <property type="entry name" value="LNT_N"/>
</dbReference>
<dbReference type="NCBIfam" id="TIGR00546">
    <property type="entry name" value="lnt"/>
    <property type="match status" value="1"/>
</dbReference>
<dbReference type="PANTHER" id="PTHR38686">
    <property type="entry name" value="APOLIPOPROTEIN N-ACYLTRANSFERASE"/>
    <property type="match status" value="1"/>
</dbReference>
<dbReference type="PANTHER" id="PTHR38686:SF1">
    <property type="entry name" value="APOLIPOPROTEIN N-ACYLTRANSFERASE"/>
    <property type="match status" value="1"/>
</dbReference>
<dbReference type="Pfam" id="PF00795">
    <property type="entry name" value="CN_hydrolase"/>
    <property type="match status" value="1"/>
</dbReference>
<dbReference type="Pfam" id="PF20154">
    <property type="entry name" value="LNT_N"/>
    <property type="match status" value="1"/>
</dbReference>
<dbReference type="SUPFAM" id="SSF56317">
    <property type="entry name" value="Carbon-nitrogen hydrolase"/>
    <property type="match status" value="1"/>
</dbReference>
<dbReference type="PROSITE" id="PS50263">
    <property type="entry name" value="CN_HYDROLASE"/>
    <property type="match status" value="1"/>
</dbReference>